<organism>
    <name type="scientific">Histophilus somni (strain 2336)</name>
    <name type="common">Haemophilus somnus</name>
    <dbReference type="NCBI Taxonomy" id="228400"/>
    <lineage>
        <taxon>Bacteria</taxon>
        <taxon>Pseudomonadati</taxon>
        <taxon>Pseudomonadota</taxon>
        <taxon>Gammaproteobacteria</taxon>
        <taxon>Pasteurellales</taxon>
        <taxon>Pasteurellaceae</taxon>
        <taxon>Histophilus</taxon>
    </lineage>
</organism>
<protein>
    <recommendedName>
        <fullName>Protein adenylyltransferase and cysteine protease IbpA</fullName>
        <shortName>HMW IgBP</shortName>
    </recommendedName>
    <alternativeName>
        <fullName>p120</fullName>
    </alternativeName>
    <domain>
        <recommendedName>
            <fullName>Protein adenylyltransferase IbpA</fullName>
            <ecNumber evidence="6 7">2.7.7.108</ecNumber>
        </recommendedName>
        <alternativeName>
            <fullName>AMPylator IbpA</fullName>
        </alternativeName>
    </domain>
    <domain>
        <recommendedName>
            <fullName>Cysteine protease IbpA</fullName>
            <ecNumber>3.4.22.-</ecNumber>
        </recommendedName>
    </domain>
    <component>
        <recommendedName>
            <fullName>Protein p76 IgBP</fullName>
        </recommendedName>
        <alternativeName>
            <fullName>76 kDa antigen</fullName>
        </alternativeName>
    </component>
</protein>
<reference key="1">
    <citation type="journal article" date="2005" name="Microb. Pathog.">
        <title>Genetic and functional analysis of Haemophilus somnus high molecular weight-immunoglobulin binding proteins.</title>
        <authorList>
            <person name="Tagawa Y."/>
            <person name="Sanders J.D."/>
            <person name="Uchida I."/>
            <person name="Bastida-Corcuera F.D."/>
            <person name="Kawashima K."/>
            <person name="Corbeil L.B."/>
        </authorList>
    </citation>
    <scope>NUCLEOTIDE SEQUENCE [GENOMIC DNA]</scope>
    <scope>SUBCELLULAR LOCATION</scope>
    <scope>IMMUNOGLOBULIN-BINDING OF SUBFRAGMENTS</scope>
    <scope>IDENTIFICATION OF FULL LENGTH GENE</scope>
</reference>
<reference key="2">
    <citation type="journal article" date="1993" name="J. Gen. Microbiol.">
        <title>Molecular analysis of a gene encoding a serum-resistance-associated 76 kDa surface antigen of Haemophilus somnus.</title>
        <authorList>
            <person name="Cole S.P."/>
            <person name="Guiney D.G."/>
            <person name="Corbeil L.B."/>
        </authorList>
    </citation>
    <scope>NUCLEOTIDE SEQUENCE [GENOMIC DNA] OF 2612-4095</scope>
</reference>
<reference key="3">
    <citation type="submission" date="2008-02" db="EMBL/GenBank/DDBJ databases">
        <title>Complete sequence of Haemophilus somnus 2336.</title>
        <authorList>
            <consortium name="US DOE Joint Genome Institute"/>
            <person name="Siddaramappa S."/>
            <person name="Duncan A.J."/>
            <person name="Challacombe J.F."/>
            <person name="Rainey D."/>
            <person name="Gillaspy A.F."/>
            <person name="Carson M."/>
            <person name="Gipson J."/>
            <person name="Gipson M."/>
            <person name="Bruce D."/>
            <person name="Detter J.C."/>
            <person name="Han C.S."/>
            <person name="Land M."/>
            <person name="Tapia R."/>
            <person name="Thompson L.S."/>
            <person name="Orvis J."/>
            <person name="Zaitshik J."/>
            <person name="Barnes G."/>
            <person name="Brettin T.S."/>
            <person name="Dyer D.W."/>
            <person name="Inzana T.J."/>
        </authorList>
    </citation>
    <scope>NUCLEOTIDE SEQUENCE [LARGE SCALE GENOMIC DNA]</scope>
    <source>
        <strain>2336</strain>
    </source>
</reference>
<reference key="4">
    <citation type="journal article" date="1997" name="Infect. Immun.">
        <title>Haemophilus somnus immunoglobulin binding proteins and surface fibrils.</title>
        <authorList>
            <person name="Corbeil L.B."/>
            <person name="Bastida-Corcuera F.D."/>
            <person name="Beveridge T.J."/>
        </authorList>
    </citation>
    <scope>FUNCTION</scope>
    <scope>SUBCELLULAR LOCATION OF P76</scope>
    <scope>IMMUNOGLOBULIN-BINDING</scope>
    <source>
        <strain>2336</strain>
        <strain>649</strain>
    </source>
</reference>
<reference key="5">
    <citation type="journal article" date="2003" name="Microb. Pathog.">
        <title>Genetic manipulation of immunoglobulin binding proteins of Haemophilus somnus.</title>
        <authorList>
            <person name="Sanders J.D."/>
            <person name="Bastida-Corcuera F.D."/>
            <person name="Arnold K.F."/>
            <person name="Wunderlich A.C."/>
            <person name="Corbeil L.B."/>
        </authorList>
    </citation>
    <scope>FUNCTION</scope>
    <scope>OTHER START SITES POSSIBLE</scope>
    <source>
        <strain>8025</strain>
    </source>
</reference>
<reference key="6">
    <citation type="journal article" date="2009" name="Mol. Cell">
        <title>The fic domain: regulation of cell signaling by adenylylation.</title>
        <authorList>
            <person name="Worby C.A."/>
            <person name="Mattoo S."/>
            <person name="Kruger R.P."/>
            <person name="Corbeil L.B."/>
            <person name="Koller A."/>
            <person name="Mendez J.C."/>
            <person name="Zekarias B."/>
            <person name="Lazar C."/>
            <person name="Dixon J.E."/>
        </authorList>
    </citation>
    <scope>FUNCTION</scope>
    <scope>CATALYTIC ACTIVITY</scope>
    <scope>MUTAGENESIS OF HIS-3717; ASN-3723; ARG-3725 AND ARG-3728</scope>
</reference>
<reference key="7">
    <citation type="journal article" date="2010" name="Nat. Struct. Mol. Biol.">
        <title>Structural basis of Fic-mediated adenylylation.</title>
        <authorList>
            <person name="Xiao J."/>
            <person name="Worby C.A."/>
            <person name="Mattoo S."/>
            <person name="Sankaran B."/>
            <person name="Dixon J.E."/>
        </authorList>
    </citation>
    <scope>X-RAY CRYSTALLOGRAPHY (1.85 ANGSTROMS) OF 3488-3786 OF MUTANT HIS-3717 IN COMPLEX WITH AMPYLATED CDC42</scope>
    <scope>FUNCTION</scope>
    <scope>CATALYTIC ACTIVITY</scope>
    <scope>REACTION MECHANISM</scope>
    <scope>MUTAGENESIS OF 3535-ILE-PRO-3536; 3552-ILE-LEU-3553; 3668-LEU--LYS-3670; HIS-3717 AND GLY-3724</scope>
</reference>
<proteinExistence type="evidence at protein level"/>
<accession>Q06277</accession>
<accession>B0UUL0</accession>
<accession>Q7WZI3</accession>
<sequence>MNKNCYKLIFSKTRGCLVPVAECITSAVDSGSSDSVVVSEKTDEEDRQGSIEDYRLSNVCLSVKTFLNPVSSALCLNWKSVSVLLLSMVAAPNFAQSAEEAAKAEKTPKLTEIQNGNDGIQLETKNQNIGVGAGTTENNHPTKLYKTENNVIVIDIAKPNDKGISDNRFQKFNIPNGAVFKNNKDQQRSELVGYLEGNKNLADKEAKVILNQVTGSELSQIKGALEILGTKADLVIANQHGINLNGVQTINAGRFVATTSKLIDPNKMEFDVTQGTVTIDVNGFATDNLPYLDIVAKKIEQKGTIGNKEKEKNKTSETEITFIAGKGKIKYNIENDGKTKLEVQKDSNTSQPSDKEEVAITGASTGAMHGKSIKLIVTEQGAGVKHDGIILSENDIKIESNKGDIDLGDKLQAKNEISLNNAKRITIANEITADKSITITADDVKLKNNKEASATEEAKLKGKGKLASKKVKVEAKKSLVLDDETKVVATDLELKSQTLTNQGRIYGNKVKIDTDKLVNKKEIYAEDNLDITTKGKTVTVSVNKDNKRKADVKEETVADLDVGFENTGTIESKSKAKLTFKDNTSFVSKGNKFIKAKDELTIDAQNVVISENDELQTTARLTINAAGNVVNNGLLASGKTLTINAKQGSIYNEKGILGAREQLTLSAKGNNKETEGNIINGADSLLHSEGKMELDAENTVYNLGNIFAKSDLTVKANELINDVKLSGSITKKSPYSVLNRYRRSDIASHGWHNNDYRLWINPIEFEKAEVKVEKAGLIRAEGNFKFEGKKGDNQQDATLTNHGVINVKNTFEAQNAKVVNNMKAYQANLLTEFFKQKQDITFNYQPRARLFLSALSGQAERKFNSLEELFDGLFSEQPITNSSSYYADNSQAVHLLEEIKSPTFQKAMTLVFGANWKNEDHKKLSQRWKEFKEKQDAHFDYRPTDKAKILAQRINGKIDELKNGSTGGFSESERITVGQHKFDLSKVEFRSEVNRKENLNNSNVDLSALSDLLSIPNLFVDNSVQLDKTVDKNIEIDEEDEFLLKPHTGEEPDLLNENELSENGKFLDKLLGEIGEKTYIREVSDDWERDPDEPDEPDYKTESRLETRDRFDTLPSEVQDKLRQKFNEYKEKAQQKRQAEALQAKTKNEQLQSDLETGYKEEEKRQAKNDLEKQAELQQLDQQEKEKLAKEKELQGKINEEKQQEALAKQKQEQQKQADAKAKIEEEKRLEEYRKELAKDHQIEEALSKNQFLKEVDDTRPKVETDPLYRTKLQYINQDEYFGSKYFLNKVGSSTDAGKKVAVIGDNYLEHQLITKSIEKKVDNHLALKYQVNDAQLVKKLIDNSYFESKELGLKVGEALTKEQQNQLKQDIVWYVKANINNKEVLLPQVYFANKTLRDAEKFKGLGDALIRANEINLKTRDVLNSGTISGKNIDIEAENKIKNRGDILSEESTRLVGHKGIDNTARSFVNGNGDVEVQRASIRTEGHLHLEADEDSDINSKGSDIKGKTGFVKARNFNTTDTHRTEHSVEKGRIFSKKGEILGYRKESTQKAISVGSNTEFDHVHFAIKNDVNQEGSKIKAKVVTGVVQGDYNTKAGRNAQQTERYIRLDQEYSSGHISGAGFTVSHERDSQNGEKTNIGGASSNTGTGFTLGGSFSETREKETSLTHTNSDLQVDHGILHVLKKAEIGGVDINKHKFTGKAVEEDEAKAEQQAKAKAAPDATDNAAQKEEPKFKVLSQSEVDDLMTEKSANDLFNKYKKVKEDEGFELSAKEITSNKQKDEYHLDSERSVLKFGIETEGHSAIADAVSHVAKEIVEAQRGVKQDGTVALQHISDVANIVTGELVGGSSKFGFERNYETNKVKETSDIRTKIAGNITLSAHGGNLQLKNVESDANSKLTLQAKRNVDILDGETTRESTERQSRQKFAFGINSGCSVMSGGCNGGVSGSVDGNESFTTEKSVTHNNSLLRAKNLKIAAGKDLNLISSNIKADHLDLNIKGKTNIVSKQDSFDRLYRGFDFSASAGAALSSSTLVKGNGSFGAGYTHEVENRKLLNQQAGIVANRITGQIKDLDLVAAHFINKDENSGFRVSGNVTSQQLNDSHHKDGGSVGVSVGINERGASSFNVRGGRAEQKHYDAVQKSVISGINLKDNNVTGEIVDDLSKAKTVTRDDVYASTQFNFEVADLVELGEKAKSKLQSKFSKAVNNDAEQPTTTRISSEDVVEMVDNPLYGSNADVRKLRTLDEVGEGYSTLGDQNANKGRKLPNGSDDIYSLLGKVKVSGDEPVYDKVSAEGAYDLLGDSNANKGRTLRNNSDDLYSTVGDANSDISRIRSNVYDEIAAGPYSLLGRTKAAEEHIYEQIGEGPYSLLGNGSAVRNRTLGGESNSTYSTVGDANSDISRIRSNVYDEIVAGPYSLLGKPKAAEEHIYEQIGEGPYSLLGNGSAVRNRTLGGESDSPYSTVGDANSDISRIRSNVYDEIVAGPYSLLGRTKAAEEHIYEQIGEGPYSLLGNGSAVRNRTLGGESDSPYSLLGGEGTRNKVLADTIESIYSTLSRPQASSNLEMVDNPLYDSVRRSASDQLPELPTVRNLLNSDTEAGNGTYSEITSRTRNANDPLPPLPNEFRTRLSQGADLADHVYDTIGSIYSVLSKPKASSNLEMVDNPLYGSVRRAAGDQLPELPTVKTLLNKVEEVGNEIYSEITSKTRSANDPLPALPNFRLTQEVDTADHIYADINDVVNRANKAKRDLPATPEATPKVAVDGGDYATIGEVSPLQPRASRQQGSSDYEEIPLPQETAPQKTSPVKRTSAEGEDGYATIAEVLQPRAAKGQVSDYETIPLDEPSQAAVRTERSAVEGDYAEITSPSIQPRSARGQSGGEEFEPFPSEFSSEPQSPKRALPAENAVVNELGNELKARLKSKEDQANPAKAEVSEPIYATLDKSPEGLARAKAKGDEAAAANPIVKTRVEDDVAPELPARPSNLSDSISNETIAENGQSVALGTPKSAVAESNRNNNGNQKLQSEGAEGVSPKTKSEDKSWFAKVKDFFFAKSNKSQAKEAKSEQETVSKPNYDSLEDDLNLKNLLALEDKRGSSFEENVLKNPEFLAEAREIAKKYIPEATIKQMGNSPEFDEILTEGAKKVEKRINDALTFKPSVDEFNEIQGLVKNIQKGSAVDDLNAQTLAITEALADTSKTIQRNPKLKEEVQGAIEEFLKSSQGKELTVEMIEKLNHGLRPDEGSDRLLYKKENLTKENAVFSSPQASKIQLNETVDFINQAIKQNVEPSVLAGLVYQRLIAYHPFAEGNGRMARVVVNKILLDAGYPPFTKFSSEFETQIIPQTKATAKSATSAEVVKEFLTELGKKSSPQEGGANNQNGQATSPVTLKSKDVSEVENTQSADSLTIKQPEQGKAGGQLPSVPKVETSVNEVAPLSSVPAELKDAAGGNKKAAEKSEGATGVEKEKTTLFQRVKQFFTGSKSGAKPVAGDETANKVNYQDLEDNLNLKGLISLEDDRNANFESNVLKNEKFLDEAREISKKSIPEATVKQMSHLPEFDDILTEGAKKVESRINKAITFRPSVEEFSEIQDLVKTLPKTKVIEDLSTKTNEITEALAATSKTIQRTPELKEQLKTAIEDFLQNSQGKPLTVQMIENLNHGLRPDEGEGRLLYKKENLTKENAVFSSPEAAKIQLAETVDFINRAKNEGIEPSVVGALVYQRLIAYHPFAEGNGRMARVIVNKILLDAGYPAFTKFSDEFEPQIIPQTKASTKSATSSEVVVEFLKELAKKGSKEDNEQNLEKTDRTSTDLTESAVENSAALSSGTVRSATVSETVTETEQAKAKPVSDLVSSKDLVEQQRTVLQRIQDQFQPLKVKSKIDAVRSSVEEFGGEVSFKFAQSKGEVYKEIVKHIETQNGVCESTCAHWIAKNVNPTDENFFNTLYEGGKKGHLKKETIDSIKKLQTEFINSGSATQQFKLTDSWLQEQGVVPKEKKVADFVRRDEVSGTVSKNDVSSLVKAILDTGDDTAGVKKISINLEGGSHTVSAAVDGSKVTFFDPNFGEMTFPTHQQFENWLKNAFWQKSGYAGKQEGRRFFNVVNYKKNN</sequence>
<dbReference type="EC" id="2.7.7.108" evidence="6 7"/>
<dbReference type="EC" id="3.4.22.-"/>
<dbReference type="EMBL" id="AB087258">
    <property type="protein sequence ID" value="BAC78649.1"/>
    <property type="molecule type" value="Genomic_DNA"/>
</dbReference>
<dbReference type="EMBL" id="L10282">
    <property type="protein sequence ID" value="AAC36827.1"/>
    <property type="status" value="ALT_INIT"/>
    <property type="molecule type" value="Unassigned_DNA"/>
</dbReference>
<dbReference type="EMBL" id="CP000947">
    <property type="protein sequence ID" value="ACA31239.1"/>
    <property type="molecule type" value="Genomic_DNA"/>
</dbReference>
<dbReference type="RefSeq" id="WP_012340627.1">
    <property type="nucleotide sequence ID" value="NC_010519.1"/>
</dbReference>
<dbReference type="PDB" id="3N3U">
    <property type="method" value="X-ray"/>
    <property type="resolution" value="1.85 A"/>
    <property type="chains" value="A=3488-3786"/>
</dbReference>
<dbReference type="PDB" id="4ITR">
    <property type="method" value="X-ray"/>
    <property type="resolution" value="2.30 A"/>
    <property type="chains" value="A/B=3482-3797"/>
</dbReference>
<dbReference type="PDB" id="6SIU">
    <property type="method" value="X-ray"/>
    <property type="resolution" value="2.49 A"/>
    <property type="chains" value="A/B=3483-3797"/>
</dbReference>
<dbReference type="PDBsum" id="3N3U"/>
<dbReference type="PDBsum" id="4ITR"/>
<dbReference type="PDBsum" id="6SIU"/>
<dbReference type="SMR" id="Q06277"/>
<dbReference type="STRING" id="228400.HSM_1489"/>
<dbReference type="GeneID" id="31487788"/>
<dbReference type="KEGG" id="hsm:HSM_1489"/>
<dbReference type="HOGENOM" id="CLU_000190_0_0_6"/>
<dbReference type="EvolutionaryTrace" id="Q06277"/>
<dbReference type="GO" id="GO:0009279">
    <property type="term" value="C:cell outer membrane"/>
    <property type="evidence" value="ECO:0007669"/>
    <property type="project" value="UniProtKB-SubCell"/>
</dbReference>
<dbReference type="GO" id="GO:0005576">
    <property type="term" value="C:extracellular region"/>
    <property type="evidence" value="ECO:0007669"/>
    <property type="project" value="UniProtKB-SubCell"/>
</dbReference>
<dbReference type="GO" id="GO:0070733">
    <property type="term" value="F:AMPylase activity"/>
    <property type="evidence" value="ECO:0000314"/>
    <property type="project" value="UniProtKB"/>
</dbReference>
<dbReference type="GO" id="GO:0005524">
    <property type="term" value="F:ATP binding"/>
    <property type="evidence" value="ECO:0007669"/>
    <property type="project" value="UniProtKB-KW"/>
</dbReference>
<dbReference type="GO" id="GO:0004197">
    <property type="term" value="F:cysteine-type endopeptidase activity"/>
    <property type="evidence" value="ECO:0007669"/>
    <property type="project" value="InterPro"/>
</dbReference>
<dbReference type="GO" id="GO:0034260">
    <property type="term" value="P:negative regulation of GTPase activity"/>
    <property type="evidence" value="ECO:0000314"/>
    <property type="project" value="UniProtKB"/>
</dbReference>
<dbReference type="GO" id="GO:0018117">
    <property type="term" value="P:protein adenylylation"/>
    <property type="evidence" value="ECO:0000314"/>
    <property type="project" value="UniProtKB"/>
</dbReference>
<dbReference type="GO" id="GO:0036211">
    <property type="term" value="P:protein modification process"/>
    <property type="evidence" value="ECO:0000314"/>
    <property type="project" value="UniProtKB"/>
</dbReference>
<dbReference type="GO" id="GO:0006508">
    <property type="term" value="P:proteolysis"/>
    <property type="evidence" value="ECO:0007669"/>
    <property type="project" value="UniProtKB-KW"/>
</dbReference>
<dbReference type="GO" id="GO:0141140">
    <property type="term" value="P:symbiont-mediated suppression of host immunoglobulin-mediated immune response"/>
    <property type="evidence" value="ECO:0000269"/>
    <property type="project" value="SigSci"/>
</dbReference>
<dbReference type="CDD" id="cd20498">
    <property type="entry name" value="C58_YopT"/>
    <property type="match status" value="1"/>
</dbReference>
<dbReference type="FunFam" id="1.10.3290.10:FF:000006">
    <property type="entry name" value="Protein adenylyltransferase and cysteine protease IbpA"/>
    <property type="match status" value="1"/>
</dbReference>
<dbReference type="Gene3D" id="3.90.70.20">
    <property type="match status" value="1"/>
</dbReference>
<dbReference type="Gene3D" id="1.10.3290.10">
    <property type="entry name" value="Fido-like domain"/>
    <property type="match status" value="2"/>
</dbReference>
<dbReference type="Gene3D" id="2.160.20.10">
    <property type="entry name" value="Single-stranded right-handed beta-helix, Pectin lyase-like"/>
    <property type="match status" value="1"/>
</dbReference>
<dbReference type="InterPro" id="IPR024973">
    <property type="entry name" value="ESPR"/>
</dbReference>
<dbReference type="InterPro" id="IPR008638">
    <property type="entry name" value="FhaB/CdiA-like_TPS"/>
</dbReference>
<dbReference type="InterPro" id="IPR003812">
    <property type="entry name" value="Fido"/>
</dbReference>
<dbReference type="InterPro" id="IPR036597">
    <property type="entry name" value="Fido-like_dom_sf"/>
</dbReference>
<dbReference type="InterPro" id="IPR040198">
    <property type="entry name" value="Fido_containing"/>
</dbReference>
<dbReference type="InterPro" id="IPR025157">
    <property type="entry name" value="Hemagglutinin_rpt"/>
</dbReference>
<dbReference type="InterPro" id="IPR038765">
    <property type="entry name" value="Papain-like_cys_pep_sf"/>
</dbReference>
<dbReference type="InterPro" id="IPR012334">
    <property type="entry name" value="Pectin_lyas_fold"/>
</dbReference>
<dbReference type="InterPro" id="IPR011050">
    <property type="entry name" value="Pectin_lyase_fold/virulence"/>
</dbReference>
<dbReference type="InterPro" id="IPR003951">
    <property type="entry name" value="Peptidase_C58"/>
</dbReference>
<dbReference type="InterPro" id="IPR006473">
    <property type="entry name" value="Peptidase_C58_Yopt"/>
</dbReference>
<dbReference type="NCBIfam" id="TIGR01901">
    <property type="entry name" value="adhes_NPXG"/>
    <property type="match status" value="1"/>
</dbReference>
<dbReference type="NCBIfam" id="TIGR01586">
    <property type="entry name" value="yopT_cys_prot"/>
    <property type="match status" value="1"/>
</dbReference>
<dbReference type="PANTHER" id="PTHR13504:SF38">
    <property type="entry name" value="FIDO DOMAIN-CONTAINING PROTEIN"/>
    <property type="match status" value="1"/>
</dbReference>
<dbReference type="PANTHER" id="PTHR13504">
    <property type="entry name" value="FIDO DOMAIN-CONTAINING PROTEIN DDB_G0283145"/>
    <property type="match status" value="1"/>
</dbReference>
<dbReference type="Pfam" id="PF13018">
    <property type="entry name" value="ESPR"/>
    <property type="match status" value="1"/>
</dbReference>
<dbReference type="Pfam" id="PF02661">
    <property type="entry name" value="Fic"/>
    <property type="match status" value="2"/>
</dbReference>
<dbReference type="Pfam" id="PF13332">
    <property type="entry name" value="Fil_haemagg_2"/>
    <property type="match status" value="1"/>
</dbReference>
<dbReference type="Pfam" id="PF03543">
    <property type="entry name" value="Peptidase_C58"/>
    <property type="match status" value="1"/>
</dbReference>
<dbReference type="Pfam" id="PF05860">
    <property type="entry name" value="TPS"/>
    <property type="match status" value="1"/>
</dbReference>
<dbReference type="PRINTS" id="PR01376">
    <property type="entry name" value="BACSURFANTGN"/>
</dbReference>
<dbReference type="SMART" id="SM00912">
    <property type="entry name" value="Haemagg_act"/>
    <property type="match status" value="1"/>
</dbReference>
<dbReference type="SUPFAM" id="SSF54001">
    <property type="entry name" value="Cysteine proteinases"/>
    <property type="match status" value="1"/>
</dbReference>
<dbReference type="SUPFAM" id="SSF140931">
    <property type="entry name" value="Fic-like"/>
    <property type="match status" value="2"/>
</dbReference>
<dbReference type="SUPFAM" id="SSF51126">
    <property type="entry name" value="Pectin lyase-like"/>
    <property type="match status" value="1"/>
</dbReference>
<dbReference type="PROSITE" id="PS51459">
    <property type="entry name" value="FIDO"/>
    <property type="match status" value="2"/>
</dbReference>
<keyword id="KW-0002">3D-structure</keyword>
<keyword id="KW-0067">ATP-binding</keyword>
<keyword id="KW-0998">Cell outer membrane</keyword>
<keyword id="KW-0175">Coiled coil</keyword>
<keyword id="KW-0378">Hydrolase</keyword>
<keyword id="KW-0472">Membrane</keyword>
<keyword id="KW-0511">Multifunctional enzyme</keyword>
<keyword id="KW-0547">Nucleotide-binding</keyword>
<keyword id="KW-0548">Nucleotidyltransferase</keyword>
<keyword id="KW-0645">Protease</keyword>
<keyword id="KW-0677">Repeat</keyword>
<keyword id="KW-0964">Secreted</keyword>
<keyword id="KW-0732">Signal</keyword>
<keyword id="KW-0788">Thiol protease</keyword>
<keyword id="KW-0808">Transferase</keyword>
<keyword id="KW-0843">Virulence</keyword>
<evidence type="ECO:0000255" key="1"/>
<evidence type="ECO:0000255" key="2">
    <source>
        <dbReference type="PROSITE-ProRule" id="PRU00791"/>
    </source>
</evidence>
<evidence type="ECO:0000256" key="3">
    <source>
        <dbReference type="SAM" id="MobiDB-lite"/>
    </source>
</evidence>
<evidence type="ECO:0000269" key="4">
    <source>
    </source>
</evidence>
<evidence type="ECO:0000269" key="5">
    <source>
    </source>
</evidence>
<evidence type="ECO:0000269" key="6">
    <source>
    </source>
</evidence>
<evidence type="ECO:0000269" key="7">
    <source>
    </source>
</evidence>
<evidence type="ECO:0000269" key="8">
    <source>
    </source>
</evidence>
<evidence type="ECO:0000305" key="9"/>
<evidence type="ECO:0000305" key="10">
    <source>
    </source>
</evidence>
<evidence type="ECO:0007829" key="11">
    <source>
        <dbReference type="PDB" id="3N3U"/>
    </source>
</evidence>
<evidence type="ECO:0007829" key="12">
    <source>
        <dbReference type="PDB" id="4ITR"/>
    </source>
</evidence>
<feature type="signal peptide" evidence="1">
    <location>
        <begin position="1"/>
        <end position="97"/>
    </location>
</feature>
<feature type="chain" id="PRO_0000338408" description="Protein adenylyltransferase and cysteine protease IbpA">
    <location>
        <begin position="98"/>
        <end position="4095"/>
    </location>
</feature>
<feature type="chain" id="PRO_0000192510" description="Protein p76 IgBP">
    <location>
        <begin position="3222"/>
        <end position="4095"/>
    </location>
</feature>
<feature type="repeat" description="1">
    <location>
        <begin position="2250"/>
        <end position="2271"/>
    </location>
</feature>
<feature type="repeat" description="2">
    <location>
        <begin position="2272"/>
        <end position="2295"/>
    </location>
</feature>
<feature type="repeat" description="3">
    <location>
        <begin position="2296"/>
        <end position="2317"/>
    </location>
</feature>
<feature type="repeat" description="4">
    <location>
        <begin position="2318"/>
        <end position="2343"/>
    </location>
</feature>
<feature type="repeat" description="5">
    <location>
        <begin position="2344"/>
        <end position="2365"/>
    </location>
</feature>
<feature type="repeat" description="6">
    <location>
        <begin position="2366"/>
        <end position="2387"/>
    </location>
</feature>
<feature type="repeat" description="7">
    <location>
        <begin position="2388"/>
        <end position="2413"/>
    </location>
</feature>
<feature type="repeat" description="8">
    <location>
        <begin position="2414"/>
        <end position="2435"/>
    </location>
</feature>
<feature type="repeat" description="9">
    <location>
        <begin position="2436"/>
        <end position="2457"/>
    </location>
</feature>
<feature type="repeat" description="10">
    <location>
        <begin position="2458"/>
        <end position="2483"/>
    </location>
</feature>
<feature type="repeat" description="11">
    <location>
        <begin position="2484"/>
        <end position="2505"/>
    </location>
</feature>
<feature type="repeat" description="12">
    <location>
        <begin position="2506"/>
        <end position="2527"/>
    </location>
</feature>
<feature type="domain" description="Fido 1" evidence="2">
    <location>
        <begin position="3218"/>
        <end position="3355"/>
    </location>
</feature>
<feature type="domain" description="Fido 2" evidence="2">
    <location>
        <begin position="3640"/>
        <end position="3777"/>
    </location>
</feature>
<feature type="region of interest" description="Binds bovine IgG2 Fc">
    <location>
        <begin position="972"/>
        <end position="1515"/>
    </location>
</feature>
<feature type="region of interest" description="Disordered" evidence="3">
    <location>
        <begin position="1082"/>
        <end position="1117"/>
    </location>
</feature>
<feature type="region of interest" description="Binds bovine IgG2 Fc">
    <location>
        <begin position="1116"/>
        <end position="1255"/>
    </location>
</feature>
<feature type="region of interest" description="Disordered" evidence="3">
    <location>
        <begin position="1130"/>
        <end position="1154"/>
    </location>
</feature>
<feature type="region of interest" description="Disordered" evidence="3">
    <location>
        <begin position="1204"/>
        <end position="1223"/>
    </location>
</feature>
<feature type="region of interest" description="Disordered" evidence="3">
    <location>
        <begin position="1625"/>
        <end position="1652"/>
    </location>
</feature>
<feature type="region of interest" description="Disordered" evidence="3">
    <location>
        <begin position="1705"/>
        <end position="1732"/>
    </location>
</feature>
<feature type="region of interest" description="12 X 22 AA approximate repeats">
    <location>
        <begin position="2250"/>
        <end position="2527"/>
    </location>
</feature>
<feature type="region of interest" description="Disordered" evidence="3">
    <location>
        <begin position="2592"/>
        <end position="2617"/>
    </location>
</feature>
<feature type="region of interest" description="Disordered" evidence="3">
    <location>
        <begin position="2765"/>
        <end position="2809"/>
    </location>
</feature>
<feature type="region of interest" description="Disordered" evidence="3">
    <location>
        <begin position="2825"/>
        <end position="2894"/>
    </location>
</feature>
<feature type="region of interest" description="Disordered" evidence="3">
    <location>
        <begin position="2914"/>
        <end position="2933"/>
    </location>
</feature>
<feature type="region of interest" description="Disordered" evidence="3">
    <location>
        <begin position="2943"/>
        <end position="3033"/>
    </location>
</feature>
<feature type="region of interest" description="Disordered" evidence="3">
    <location>
        <begin position="3049"/>
        <end position="3069"/>
    </location>
</feature>
<feature type="region of interest" description="yopT-like">
    <location>
        <begin position="3222"/>
        <end position="4095"/>
    </location>
</feature>
<feature type="region of interest" description="Binds bovine IgG2 Fc">
    <location>
        <begin position="3354"/>
        <end position="3698"/>
    </location>
</feature>
<feature type="region of interest" description="Disordered" evidence="3">
    <location>
        <begin position="3357"/>
        <end position="3415"/>
    </location>
</feature>
<feature type="region of interest" description="Disordered" evidence="3">
    <location>
        <begin position="3432"/>
        <end position="3454"/>
    </location>
</feature>
<feature type="region of interest" description="Arm region">
    <location>
        <begin position="3535"/>
        <end position="3557"/>
    </location>
</feature>
<feature type="region of interest" description="Disordered" evidence="3">
    <location>
        <begin position="3783"/>
        <end position="3829"/>
    </location>
</feature>
<feature type="coiled-coil region" evidence="1">
    <location>
        <begin position="1116"/>
        <end position="1247"/>
    </location>
</feature>
<feature type="compositionally biased region" description="Acidic residues" evidence="3">
    <location>
        <begin position="1087"/>
        <end position="1096"/>
    </location>
</feature>
<feature type="compositionally biased region" description="Basic and acidic residues" evidence="3">
    <location>
        <begin position="1097"/>
        <end position="1117"/>
    </location>
</feature>
<feature type="compositionally biased region" description="Basic and acidic residues" evidence="3">
    <location>
        <begin position="1130"/>
        <end position="1139"/>
    </location>
</feature>
<feature type="compositionally biased region" description="Low complexity" evidence="3">
    <location>
        <begin position="1716"/>
        <end position="1727"/>
    </location>
</feature>
<feature type="compositionally biased region" description="Polar residues" evidence="3">
    <location>
        <begin position="2592"/>
        <end position="2611"/>
    </location>
</feature>
<feature type="compositionally biased region" description="Polar residues" evidence="3">
    <location>
        <begin position="2794"/>
        <end position="2803"/>
    </location>
</feature>
<feature type="compositionally biased region" description="Low complexity" evidence="3">
    <location>
        <begin position="2880"/>
        <end position="2889"/>
    </location>
</feature>
<feature type="compositionally biased region" description="Polar residues" evidence="3">
    <location>
        <begin position="2977"/>
        <end position="2996"/>
    </location>
</feature>
<feature type="compositionally biased region" description="Polar residues" evidence="3">
    <location>
        <begin position="3005"/>
        <end position="3018"/>
    </location>
</feature>
<feature type="compositionally biased region" description="Basic and acidic residues" evidence="3">
    <location>
        <begin position="3052"/>
        <end position="3062"/>
    </location>
</feature>
<feature type="compositionally biased region" description="Polar residues" evidence="3">
    <location>
        <begin position="3360"/>
        <end position="3379"/>
    </location>
</feature>
<feature type="compositionally biased region" description="Polar residues" evidence="3">
    <location>
        <begin position="3388"/>
        <end position="3401"/>
    </location>
</feature>
<feature type="compositionally biased region" description="Basic and acidic residues" evidence="3">
    <location>
        <begin position="3443"/>
        <end position="3454"/>
    </location>
</feature>
<feature type="compositionally biased region" description="Basic and acidic residues" evidence="3">
    <location>
        <begin position="3783"/>
        <end position="3798"/>
    </location>
</feature>
<feature type="compositionally biased region" description="Polar residues" evidence="3">
    <location>
        <begin position="3799"/>
        <end position="3815"/>
    </location>
</feature>
<feature type="compositionally biased region" description="Low complexity" evidence="3">
    <location>
        <begin position="3816"/>
        <end position="3829"/>
    </location>
</feature>
<feature type="active site" description="For cysteine protease activity" evidence="1">
    <location>
        <position position="3910"/>
    </location>
</feature>
<feature type="active site" description="For cysteine protease activity" evidence="1">
    <location>
        <position position="4033"/>
    </location>
</feature>
<feature type="active site" description="For cysteine protease activity" evidence="1">
    <location>
        <position position="4048"/>
    </location>
</feature>
<feature type="binding site">
    <location>
        <begin position="3670"/>
        <end position="3671"/>
    </location>
    <ligand>
        <name>ATP</name>
        <dbReference type="ChEBI" id="CHEBI:30616"/>
    </ligand>
</feature>
<feature type="binding site">
    <location>
        <begin position="3722"/>
        <end position="3724"/>
    </location>
    <ligand>
        <name>ATP</name>
        <dbReference type="ChEBI" id="CHEBI:30616"/>
    </ligand>
</feature>
<feature type="binding site">
    <location>
        <position position="3728"/>
    </location>
    <ligand>
        <name>ATP</name>
        <dbReference type="ChEBI" id="CHEBI:30616"/>
    </ligand>
</feature>
<feature type="binding site">
    <location>
        <position position="3757"/>
    </location>
    <ligand>
        <name>ATP</name>
        <dbReference type="ChEBI" id="CHEBI:30616"/>
    </ligand>
</feature>
<feature type="mutagenesis site" description="Reduced adenylyltransferase toward Rho GTPase family proteins." evidence="7">
    <original>IP</original>
    <variation>AA</variation>
    <location>
        <begin position="3535"/>
        <end position="3536"/>
    </location>
</feature>
<feature type="mutagenesis site" description="Reduced adenylyltransferase toward Rho GTPase family proteins." evidence="7">
    <original>IL</original>
    <variation>AA</variation>
    <location>
        <begin position="3552"/>
        <end position="3553"/>
    </location>
</feature>
<feature type="mutagenesis site" description="Reduced adenylyltransferase activity." evidence="7">
    <original>LTK</original>
    <variation>ATA</variation>
    <location>
        <begin position="3668"/>
        <end position="3670"/>
    </location>
</feature>
<feature type="mutagenesis site" description="Abolishes adenylyltransferase activity." evidence="6 7">
    <original>H</original>
    <variation>A</variation>
    <location>
        <position position="3717"/>
    </location>
</feature>
<feature type="mutagenesis site" description="Does not affect adenylyltransferase activity." evidence="6">
    <original>N</original>
    <variation>A</variation>
    <location>
        <position position="3723"/>
    </location>
</feature>
<feature type="mutagenesis site" description="Nucleotide-binding mutant. No adenylyltransferase activity abd reduced toxicity." evidence="7">
    <original>G</original>
    <variation>A</variation>
    <location>
        <position position="3724"/>
    </location>
</feature>
<feature type="mutagenesis site" description="Does not affect adenylyltransferase activity." evidence="6">
    <original>R</original>
    <variation>A</variation>
    <location>
        <position position="3725"/>
    </location>
</feature>
<feature type="mutagenesis site" description="Does not affect adenylyltransferase activity." evidence="6">
    <original>R</original>
    <variation>A</variation>
    <location>
        <position position="3728"/>
    </location>
</feature>
<feature type="helix" evidence="11">
    <location>
        <begin position="3499"/>
        <end position="3511"/>
    </location>
</feature>
<feature type="helix" evidence="11">
    <location>
        <begin position="3513"/>
        <end position="3516"/>
    </location>
</feature>
<feature type="turn" evidence="11">
    <location>
        <begin position="3517"/>
        <end position="3519"/>
    </location>
</feature>
<feature type="helix" evidence="11">
    <location>
        <begin position="3521"/>
        <end position="3534"/>
    </location>
</feature>
<feature type="helix" evidence="11">
    <location>
        <begin position="3539"/>
        <end position="3543"/>
    </location>
</feature>
<feature type="helix" evidence="11">
    <location>
        <begin position="3549"/>
        <end position="3552"/>
    </location>
</feature>
<feature type="helix" evidence="11">
    <location>
        <begin position="3555"/>
        <end position="3568"/>
    </location>
</feature>
<feature type="helix" evidence="11">
    <location>
        <begin position="3574"/>
        <end position="3585"/>
    </location>
</feature>
<feature type="helix" evidence="11">
    <location>
        <begin position="3596"/>
        <end position="3609"/>
    </location>
</feature>
<feature type="helix" evidence="11">
    <location>
        <begin position="3612"/>
        <end position="3616"/>
    </location>
</feature>
<feature type="helix" evidence="11">
    <location>
        <begin position="3618"/>
        <end position="3635"/>
    </location>
</feature>
<feature type="helix" evidence="11">
    <location>
        <begin position="3642"/>
        <end position="3651"/>
    </location>
</feature>
<feature type="strand" evidence="12">
    <location>
        <begin position="3668"/>
        <end position="3670"/>
    </location>
</feature>
<feature type="helix" evidence="11">
    <location>
        <begin position="3678"/>
        <end position="3697"/>
    </location>
</feature>
<feature type="helix" evidence="11">
    <location>
        <begin position="3702"/>
        <end position="3716"/>
    </location>
</feature>
<feature type="strand" evidence="11">
    <location>
        <begin position="3719"/>
        <end position="3721"/>
    </location>
</feature>
<feature type="helix" evidence="11">
    <location>
        <begin position="3723"/>
        <end position="3737"/>
    </location>
</feature>
<feature type="turn" evidence="11">
    <location>
        <begin position="3748"/>
        <end position="3750"/>
    </location>
</feature>
<feature type="helix" evidence="11">
    <location>
        <begin position="3751"/>
        <end position="3754"/>
    </location>
</feature>
<feature type="strand" evidence="11">
    <location>
        <begin position="3758"/>
        <end position="3762"/>
    </location>
</feature>
<feature type="helix" evidence="11">
    <location>
        <begin position="3767"/>
        <end position="3779"/>
    </location>
</feature>
<feature type="turn" evidence="12">
    <location>
        <begin position="3780"/>
        <end position="3782"/>
    </location>
</feature>
<gene>
    <name type="primary">ibpA</name>
    <name type="synonym">p76</name>
    <name type="ordered locus">HSM_1489</name>
</gene>
<name>IBPA_HISS2</name>
<comment type="function">
    <text evidence="4 6 7 8">Adenylyltransferase involved in virulence by mediating the addition of adenosine 5'-monophosphate (AMP) to specific tyrosine residue of host Rho GTPases RhoA, Rac and Cdc42. The resulting AMPylation inactivates Rho GTPases, thereby inhibiting actin assembly in infected cells. Probably also acts as a cysteine protease, which may play a central role after invasion of host cell and in virulence. Possible member (with IbpB) of a 2 partner secretion. Probably able to bind bovine epithelial cells (host cells). May participate in the formation of fibrils at the surface of the bacteria.</text>
</comment>
<comment type="catalytic activity">
    <reaction evidence="6 7">
        <text>L-tyrosyl-[protein] + ATP = O-(5'-adenylyl)-L-tyrosyl-[protein] + diphosphate</text>
        <dbReference type="Rhea" id="RHEA:54288"/>
        <dbReference type="Rhea" id="RHEA-COMP:10136"/>
        <dbReference type="Rhea" id="RHEA-COMP:13846"/>
        <dbReference type="ChEBI" id="CHEBI:30616"/>
        <dbReference type="ChEBI" id="CHEBI:33019"/>
        <dbReference type="ChEBI" id="CHEBI:46858"/>
        <dbReference type="ChEBI" id="CHEBI:83624"/>
        <dbReference type="EC" id="2.7.7.108"/>
    </reaction>
</comment>
<comment type="catalytic activity">
    <reaction evidence="6 7">
        <text>L-threonyl-[protein] + ATP = 3-O-(5'-adenylyl)-L-threonyl-[protein] + diphosphate</text>
        <dbReference type="Rhea" id="RHEA:54292"/>
        <dbReference type="Rhea" id="RHEA-COMP:11060"/>
        <dbReference type="Rhea" id="RHEA-COMP:13847"/>
        <dbReference type="ChEBI" id="CHEBI:30013"/>
        <dbReference type="ChEBI" id="CHEBI:30616"/>
        <dbReference type="ChEBI" id="CHEBI:33019"/>
        <dbReference type="ChEBI" id="CHEBI:138113"/>
        <dbReference type="EC" id="2.7.7.108"/>
    </reaction>
</comment>
<comment type="subunit">
    <text evidence="7">Immunoglobulin-binding protein.</text>
</comment>
<comment type="subcellular location">
    <subcellularLocation>
        <location evidence="5 8">Secreted</location>
    </subcellularLocation>
    <text>High molecular weight-immunoglobulin binding protein IbpA, and probably other shorter forms.</text>
</comment>
<comment type="subcellular location">
    <molecule>Protein p76 IgBP</molecule>
    <subcellularLocation>
        <location evidence="9">Cell outer membrane</location>
        <topology evidence="9">Peripheral membrane protein</topology>
        <orientation evidence="9">Extracellular side</orientation>
    </subcellularLocation>
</comment>
<comment type="domain">
    <text>The fido domains mediate the adenylyltransferase activity.</text>
</comment>
<comment type="domain">
    <text evidence="7">The arm region dictates the ability to recognize Rho family proteins. Leu-3668 and Lys-3670 probably lock the position of Tyr substrate in the correct orientation for modification (PubMed:20622875).</text>
</comment>
<comment type="domain">
    <text evidence="7">When associated with Cdc42 target, adopts a conformation that mimicks the GDI-bound state of Rho GTPases.</text>
</comment>
<comment type="PTM">
    <text>The long form of the protein is probably processed, and/or the transcript may be subject to differential translational initiation.</text>
</comment>
<comment type="miscellaneous">
    <text evidence="10">The reaction mechanisms probably follows a substrate-assisted attack of ATP. According to this model, His-3717 acts by attracting a proton from the Tyr substrate, thereby preparing the Tyr as a nucleophile to attack the alpha-phosphate of ATP. This model is consistent with the observation that hydrolysis of ATP is very slow in the absence of Rho GTPases (PubMed:20622875).</text>
</comment>
<comment type="similarity">
    <text evidence="9">In the central section; belongs to the fic family.</text>
</comment>
<comment type="similarity">
    <text evidence="9">In the C-terminal section; belongs to the peptidase C58 family.</text>
</comment>
<comment type="caution">
    <text evidence="9">Was originally [PubMed:8245839] thought to be a 76 kDa immunoglobulin-binding protein; it is now apparent that the gene is much longer but how it is translated and processed is unclear.</text>
</comment>
<comment type="sequence caution" evidence="9">
    <conflict type="erroneous initiation">
        <sequence resource="EMBL-CDS" id="AAC36827"/>
    </conflict>
</comment>